<dbReference type="EMBL" id="AF169288">
    <property type="protein sequence ID" value="AAF28458.1"/>
    <property type="molecule type" value="Genomic_DNA"/>
</dbReference>
<dbReference type="EMBL" id="AB024921">
    <property type="protein sequence ID" value="BAA83492.1"/>
    <property type="molecule type" value="mRNA"/>
</dbReference>
<dbReference type="EMBL" id="AK014381">
    <property type="protein sequence ID" value="BAB29310.1"/>
    <property type="molecule type" value="mRNA"/>
</dbReference>
<dbReference type="EMBL" id="AK132306">
    <property type="protein sequence ID" value="BAE21093.1"/>
    <property type="molecule type" value="mRNA"/>
</dbReference>
<dbReference type="EMBL" id="AK169403">
    <property type="protein sequence ID" value="BAE41149.1"/>
    <property type="molecule type" value="mRNA"/>
</dbReference>
<dbReference type="EMBL" id="BC052349">
    <property type="protein sequence ID" value="AAH52349.1"/>
    <property type="molecule type" value="mRNA"/>
</dbReference>
<dbReference type="CCDS" id="CCDS19344.1"/>
<dbReference type="RefSeq" id="NP_036020.1">
    <property type="nucleotide sequence ID" value="NM_011890.5"/>
</dbReference>
<dbReference type="PDB" id="8YT8">
    <property type="method" value="EM"/>
    <property type="resolution" value="3.50 A"/>
    <property type="chains" value="B=55-317"/>
</dbReference>
<dbReference type="PDBsum" id="8YT8"/>
<dbReference type="EMDB" id="EMD-39568"/>
<dbReference type="SMR" id="P82349"/>
<dbReference type="BioGRID" id="204864">
    <property type="interactions" value="9"/>
</dbReference>
<dbReference type="CORUM" id="P82349"/>
<dbReference type="FunCoup" id="P82349">
    <property type="interactions" value="491"/>
</dbReference>
<dbReference type="STRING" id="10090.ENSMUSP00000079937"/>
<dbReference type="GlyConnect" id="2154">
    <property type="glycosylation" value="1 N-Linked glycan (1 site)"/>
</dbReference>
<dbReference type="GlyCosmos" id="P82349">
    <property type="glycosylation" value="3 sites, 1 glycan"/>
</dbReference>
<dbReference type="GlyGen" id="P82349">
    <property type="glycosylation" value="3 sites, 4 N-linked glycans (3 sites)"/>
</dbReference>
<dbReference type="iPTMnet" id="P82349"/>
<dbReference type="PhosphoSitePlus" id="P82349"/>
<dbReference type="jPOST" id="P82349"/>
<dbReference type="PaxDb" id="10090-ENSMUSP00000079937"/>
<dbReference type="PeptideAtlas" id="P82349"/>
<dbReference type="ProteomicsDB" id="261204"/>
<dbReference type="Pumba" id="P82349"/>
<dbReference type="Antibodypedia" id="2557">
    <property type="antibodies" value="229 antibodies from 31 providers"/>
</dbReference>
<dbReference type="DNASU" id="24051"/>
<dbReference type="Ensembl" id="ENSMUST00000081170.9">
    <property type="protein sequence ID" value="ENSMUSP00000079937.8"/>
    <property type="gene ID" value="ENSMUSG00000029156.12"/>
</dbReference>
<dbReference type="GeneID" id="24051"/>
<dbReference type="KEGG" id="mmu:24051"/>
<dbReference type="UCSC" id="uc008xtb.1">
    <property type="organism name" value="mouse"/>
</dbReference>
<dbReference type="AGR" id="MGI:1346523"/>
<dbReference type="CTD" id="6443"/>
<dbReference type="MGI" id="MGI:1346523">
    <property type="gene designation" value="Sgcb"/>
</dbReference>
<dbReference type="VEuPathDB" id="HostDB:ENSMUSG00000029156"/>
<dbReference type="eggNOG" id="ENOG502QUW4">
    <property type="taxonomic scope" value="Eukaryota"/>
</dbReference>
<dbReference type="GeneTree" id="ENSGT00390000008110"/>
<dbReference type="HOGENOM" id="CLU_066515_1_0_1"/>
<dbReference type="InParanoid" id="P82349"/>
<dbReference type="OMA" id="KGVQGME"/>
<dbReference type="OrthoDB" id="5843723at2759"/>
<dbReference type="PhylomeDB" id="P82349"/>
<dbReference type="TreeFam" id="TF313538"/>
<dbReference type="Reactome" id="R-MMU-9913351">
    <property type="pathway name" value="Formation of the dystrophin-glycoprotein complex (DGC)"/>
</dbReference>
<dbReference type="BioGRID-ORCS" id="24051">
    <property type="hits" value="3 hits in 77 CRISPR screens"/>
</dbReference>
<dbReference type="ChiTaRS" id="Sgcb">
    <property type="organism name" value="mouse"/>
</dbReference>
<dbReference type="PRO" id="PR:P82349"/>
<dbReference type="Proteomes" id="UP000000589">
    <property type="component" value="Chromosome 5"/>
</dbReference>
<dbReference type="RNAct" id="P82349">
    <property type="molecule type" value="protein"/>
</dbReference>
<dbReference type="Bgee" id="ENSMUSG00000029156">
    <property type="expression patterns" value="Expressed in triceps brachii and 259 other cell types or tissues"/>
</dbReference>
<dbReference type="GO" id="GO:0005737">
    <property type="term" value="C:cytoplasm"/>
    <property type="evidence" value="ECO:0007669"/>
    <property type="project" value="UniProtKB-KW"/>
</dbReference>
<dbReference type="GO" id="GO:0005856">
    <property type="term" value="C:cytoskeleton"/>
    <property type="evidence" value="ECO:0007669"/>
    <property type="project" value="UniProtKB-SubCell"/>
</dbReference>
<dbReference type="GO" id="GO:0016011">
    <property type="term" value="C:dystroglycan complex"/>
    <property type="evidence" value="ECO:0000314"/>
    <property type="project" value="MGI"/>
</dbReference>
<dbReference type="GO" id="GO:0005886">
    <property type="term" value="C:plasma membrane"/>
    <property type="evidence" value="ECO:0000314"/>
    <property type="project" value="MGI"/>
</dbReference>
<dbReference type="GO" id="GO:0016012">
    <property type="term" value="C:sarcoglycan complex"/>
    <property type="evidence" value="ECO:0000314"/>
    <property type="project" value="MGI"/>
</dbReference>
<dbReference type="GO" id="GO:0042383">
    <property type="term" value="C:sarcolemma"/>
    <property type="evidence" value="ECO:0000314"/>
    <property type="project" value="MGI"/>
</dbReference>
<dbReference type="GO" id="GO:0055013">
    <property type="term" value="P:cardiac muscle cell development"/>
    <property type="evidence" value="ECO:0000315"/>
    <property type="project" value="MGI"/>
</dbReference>
<dbReference type="GO" id="GO:0010467">
    <property type="term" value="P:gene expression"/>
    <property type="evidence" value="ECO:0000315"/>
    <property type="project" value="MGI"/>
</dbReference>
<dbReference type="GO" id="GO:0042593">
    <property type="term" value="P:glucose homeostasis"/>
    <property type="evidence" value="ECO:0000315"/>
    <property type="project" value="MGI"/>
</dbReference>
<dbReference type="GO" id="GO:0044381">
    <property type="term" value="P:glucose import in response to insulin stimulus"/>
    <property type="evidence" value="ECO:0000315"/>
    <property type="project" value="MGI"/>
</dbReference>
<dbReference type="GO" id="GO:0061024">
    <property type="term" value="P:membrane organization"/>
    <property type="evidence" value="ECO:0000304"/>
    <property type="project" value="MGI"/>
</dbReference>
<dbReference type="GO" id="GO:0055001">
    <property type="term" value="P:muscle cell development"/>
    <property type="evidence" value="ECO:0000315"/>
    <property type="project" value="MGI"/>
</dbReference>
<dbReference type="GO" id="GO:0007517">
    <property type="term" value="P:muscle organ development"/>
    <property type="evidence" value="ECO:0007669"/>
    <property type="project" value="InterPro"/>
</dbReference>
<dbReference type="GO" id="GO:0009749">
    <property type="term" value="P:response to glucose"/>
    <property type="evidence" value="ECO:0000315"/>
    <property type="project" value="MGI"/>
</dbReference>
<dbReference type="GO" id="GO:0097084">
    <property type="term" value="P:vascular associated smooth muscle cell development"/>
    <property type="evidence" value="ECO:0000315"/>
    <property type="project" value="MGI"/>
</dbReference>
<dbReference type="InterPro" id="IPR006875">
    <property type="entry name" value="Sarcoglycan"/>
</dbReference>
<dbReference type="InterPro" id="IPR027659">
    <property type="entry name" value="Sgcb"/>
</dbReference>
<dbReference type="PANTHER" id="PTHR21142:SF2">
    <property type="entry name" value="BETA-SARCOGLYCAN"/>
    <property type="match status" value="1"/>
</dbReference>
<dbReference type="PANTHER" id="PTHR21142">
    <property type="entry name" value="SARCOGLYCANS"/>
    <property type="match status" value="1"/>
</dbReference>
<dbReference type="Pfam" id="PF04790">
    <property type="entry name" value="Sarcoglycan_1"/>
    <property type="match status" value="1"/>
</dbReference>
<gene>
    <name type="primary">Sgcb</name>
</gene>
<protein>
    <recommendedName>
        <fullName>Beta-sarcoglycan</fullName>
        <shortName>Beta-SG</shortName>
    </recommendedName>
    <alternativeName>
        <fullName>43 kDa dystrophin-associated glycoprotein</fullName>
        <shortName>43DAG</shortName>
    </alternativeName>
</protein>
<sequence>MAAAAAAAAATEQQGSNGPVKKSMREKAVERRNVNKEHNSNFKAGYIPIDEDRLHKTGLRGRKGNLAICVIVLLFILAVINLLITLVIWAVIRIGPNGCDSMEFHESGLLRFKQVSDMGVIHPLYKSTVGGRRNENLVITGNNQPIVFQQGTTKLSVEKNKTSITSDIGMQFFDPRTHNILFSTDYETHEFHLPSGVKSLNVQKASTERITSNATSDLNIKVDGRAIVRGNEGVFIMGKTIEFHMGGDVELKAENSIILNGTVMVSPTRLPSSSSGDQSGSGDWVRYKLCMCADGTLFKVQVTGHNMGCQVSDNPCGNTH</sequence>
<organism>
    <name type="scientific">Mus musculus</name>
    <name type="common">Mouse</name>
    <dbReference type="NCBI Taxonomy" id="10090"/>
    <lineage>
        <taxon>Eukaryota</taxon>
        <taxon>Metazoa</taxon>
        <taxon>Chordata</taxon>
        <taxon>Craniata</taxon>
        <taxon>Vertebrata</taxon>
        <taxon>Euteleostomi</taxon>
        <taxon>Mammalia</taxon>
        <taxon>Eutheria</taxon>
        <taxon>Euarchontoglires</taxon>
        <taxon>Glires</taxon>
        <taxon>Rodentia</taxon>
        <taxon>Myomorpha</taxon>
        <taxon>Muroidea</taxon>
        <taxon>Muridae</taxon>
        <taxon>Murinae</taxon>
        <taxon>Mus</taxon>
        <taxon>Mus</taxon>
    </lineage>
</organism>
<feature type="chain" id="PRO_0000175244" description="Beta-sarcoglycan">
    <location>
        <begin position="1"/>
        <end position="320"/>
    </location>
</feature>
<feature type="topological domain" description="Cytoplasmic" evidence="1">
    <location>
        <begin position="1"/>
        <end position="67"/>
    </location>
</feature>
<feature type="transmembrane region" description="Helical; Signal-anchor for type II membrane protein" evidence="1">
    <location>
        <begin position="68"/>
        <end position="88"/>
    </location>
</feature>
<feature type="topological domain" description="Extracellular" evidence="1">
    <location>
        <begin position="89"/>
        <end position="320"/>
    </location>
</feature>
<feature type="region of interest" description="Disordered" evidence="2">
    <location>
        <begin position="1"/>
        <end position="34"/>
    </location>
</feature>
<feature type="compositionally biased region" description="Low complexity" evidence="2">
    <location>
        <begin position="1"/>
        <end position="10"/>
    </location>
</feature>
<feature type="compositionally biased region" description="Basic and acidic residues" evidence="2">
    <location>
        <begin position="23"/>
        <end position="34"/>
    </location>
</feature>
<feature type="glycosylation site" description="N-linked (GlcNAc...) asparagine" evidence="1">
    <location>
        <position position="160"/>
    </location>
</feature>
<feature type="glycosylation site" description="N-linked (GlcNAc...) asparagine" evidence="1">
    <location>
        <position position="213"/>
    </location>
</feature>
<feature type="glycosylation site" description="N-linked (GlcNAc...) asparagine" evidence="1">
    <location>
        <position position="260"/>
    </location>
</feature>
<feature type="disulfide bond" evidence="1">
    <location>
        <begin position="290"/>
        <end position="316"/>
    </location>
</feature>
<feature type="disulfide bond" evidence="1">
    <location>
        <begin position="292"/>
        <end position="309"/>
    </location>
</feature>
<comment type="function">
    <text>Component of the sarcoglycan complex, a subcomplex of the dystrophin-glycoprotein complex which forms a link between the F-actin cytoskeleton and the extracellular matrix.</text>
</comment>
<comment type="subunit">
    <text evidence="3">Cross-link to form 2 major subcomplexes: one consisting of SGCB, SGCD and SGCG and the other consisting of SGCB and SGCD. The association between SGCB and SGCG is particularly strong while SGCA is loosely associated with the other sarcoglycans.</text>
</comment>
<comment type="subcellular location">
    <subcellularLocation>
        <location evidence="3">Cell membrane</location>
        <location evidence="3">Sarcolemma</location>
        <topology evidence="3">Single-pass type II membrane protein</topology>
    </subcellularLocation>
    <subcellularLocation>
        <location evidence="3">Cytoplasm</location>
        <location evidence="3">Cytoskeleton</location>
    </subcellularLocation>
</comment>
<comment type="tissue specificity">
    <text>Most strongly expressed in skeletal and heart muscle. Also detected in proliferating myoblasts.</text>
</comment>
<comment type="PTM">
    <text>Disulfide bonds are present.</text>
</comment>
<comment type="similarity">
    <text evidence="4">Belongs to the sarcoglycan beta/delta/gamma/zeta family.</text>
</comment>
<reference key="1">
    <citation type="journal article" date="2000" name="Mol. Cell">
        <title>Disruption of the beta-sarcoglycan gene reveals pathogenetic complexity of limb-girdle muscular dystrophy type 2E.</title>
        <authorList>
            <person name="Durbeej M."/>
            <person name="Campbell K.P."/>
        </authorList>
    </citation>
    <scope>NUCLEOTIDE SEQUENCE [GENOMIC DNA]</scope>
</reference>
<reference key="2">
    <citation type="journal article" date="1999" name="Biochem. Biophys. Res. Commun.">
        <title>Developmental expression of sarcoglycan gene products in cultured myocytes.</title>
        <authorList>
            <person name="Noguchi S."/>
            <person name="Wakabayashi E."/>
            <person name="Imamura M."/>
            <person name="Yoshida M."/>
            <person name="Ozawa E."/>
        </authorList>
    </citation>
    <scope>NUCLEOTIDE SEQUENCE [MRNA]</scope>
    <source>
        <tissue>Skeletal muscle</tissue>
    </source>
</reference>
<reference key="3">
    <citation type="journal article" date="2005" name="Science">
        <title>The transcriptional landscape of the mammalian genome.</title>
        <authorList>
            <person name="Carninci P."/>
            <person name="Kasukawa T."/>
            <person name="Katayama S."/>
            <person name="Gough J."/>
            <person name="Frith M.C."/>
            <person name="Maeda N."/>
            <person name="Oyama R."/>
            <person name="Ravasi T."/>
            <person name="Lenhard B."/>
            <person name="Wells C."/>
            <person name="Kodzius R."/>
            <person name="Shimokawa K."/>
            <person name="Bajic V.B."/>
            <person name="Brenner S.E."/>
            <person name="Batalov S."/>
            <person name="Forrest A.R."/>
            <person name="Zavolan M."/>
            <person name="Davis M.J."/>
            <person name="Wilming L.G."/>
            <person name="Aidinis V."/>
            <person name="Allen J.E."/>
            <person name="Ambesi-Impiombato A."/>
            <person name="Apweiler R."/>
            <person name="Aturaliya R.N."/>
            <person name="Bailey T.L."/>
            <person name="Bansal M."/>
            <person name="Baxter L."/>
            <person name="Beisel K.W."/>
            <person name="Bersano T."/>
            <person name="Bono H."/>
            <person name="Chalk A.M."/>
            <person name="Chiu K.P."/>
            <person name="Choudhary V."/>
            <person name="Christoffels A."/>
            <person name="Clutterbuck D.R."/>
            <person name="Crowe M.L."/>
            <person name="Dalla E."/>
            <person name="Dalrymple B.P."/>
            <person name="de Bono B."/>
            <person name="Della Gatta G."/>
            <person name="di Bernardo D."/>
            <person name="Down T."/>
            <person name="Engstrom P."/>
            <person name="Fagiolini M."/>
            <person name="Faulkner G."/>
            <person name="Fletcher C.F."/>
            <person name="Fukushima T."/>
            <person name="Furuno M."/>
            <person name="Futaki S."/>
            <person name="Gariboldi M."/>
            <person name="Georgii-Hemming P."/>
            <person name="Gingeras T.R."/>
            <person name="Gojobori T."/>
            <person name="Green R.E."/>
            <person name="Gustincich S."/>
            <person name="Harbers M."/>
            <person name="Hayashi Y."/>
            <person name="Hensch T.K."/>
            <person name="Hirokawa N."/>
            <person name="Hill D."/>
            <person name="Huminiecki L."/>
            <person name="Iacono M."/>
            <person name="Ikeo K."/>
            <person name="Iwama A."/>
            <person name="Ishikawa T."/>
            <person name="Jakt M."/>
            <person name="Kanapin A."/>
            <person name="Katoh M."/>
            <person name="Kawasawa Y."/>
            <person name="Kelso J."/>
            <person name="Kitamura H."/>
            <person name="Kitano H."/>
            <person name="Kollias G."/>
            <person name="Krishnan S.P."/>
            <person name="Kruger A."/>
            <person name="Kummerfeld S.K."/>
            <person name="Kurochkin I.V."/>
            <person name="Lareau L.F."/>
            <person name="Lazarevic D."/>
            <person name="Lipovich L."/>
            <person name="Liu J."/>
            <person name="Liuni S."/>
            <person name="McWilliam S."/>
            <person name="Madan Babu M."/>
            <person name="Madera M."/>
            <person name="Marchionni L."/>
            <person name="Matsuda H."/>
            <person name="Matsuzawa S."/>
            <person name="Miki H."/>
            <person name="Mignone F."/>
            <person name="Miyake S."/>
            <person name="Morris K."/>
            <person name="Mottagui-Tabar S."/>
            <person name="Mulder N."/>
            <person name="Nakano N."/>
            <person name="Nakauchi H."/>
            <person name="Ng P."/>
            <person name="Nilsson R."/>
            <person name="Nishiguchi S."/>
            <person name="Nishikawa S."/>
            <person name="Nori F."/>
            <person name="Ohara O."/>
            <person name="Okazaki Y."/>
            <person name="Orlando V."/>
            <person name="Pang K.C."/>
            <person name="Pavan W.J."/>
            <person name="Pavesi G."/>
            <person name="Pesole G."/>
            <person name="Petrovsky N."/>
            <person name="Piazza S."/>
            <person name="Reed J."/>
            <person name="Reid J.F."/>
            <person name="Ring B.Z."/>
            <person name="Ringwald M."/>
            <person name="Rost B."/>
            <person name="Ruan Y."/>
            <person name="Salzberg S.L."/>
            <person name="Sandelin A."/>
            <person name="Schneider C."/>
            <person name="Schoenbach C."/>
            <person name="Sekiguchi K."/>
            <person name="Semple C.A."/>
            <person name="Seno S."/>
            <person name="Sessa L."/>
            <person name="Sheng Y."/>
            <person name="Shibata Y."/>
            <person name="Shimada H."/>
            <person name="Shimada K."/>
            <person name="Silva D."/>
            <person name="Sinclair B."/>
            <person name="Sperling S."/>
            <person name="Stupka E."/>
            <person name="Sugiura K."/>
            <person name="Sultana R."/>
            <person name="Takenaka Y."/>
            <person name="Taki K."/>
            <person name="Tammoja K."/>
            <person name="Tan S.L."/>
            <person name="Tang S."/>
            <person name="Taylor M.S."/>
            <person name="Tegner J."/>
            <person name="Teichmann S.A."/>
            <person name="Ueda H.R."/>
            <person name="van Nimwegen E."/>
            <person name="Verardo R."/>
            <person name="Wei C.L."/>
            <person name="Yagi K."/>
            <person name="Yamanishi H."/>
            <person name="Zabarovsky E."/>
            <person name="Zhu S."/>
            <person name="Zimmer A."/>
            <person name="Hide W."/>
            <person name="Bult C."/>
            <person name="Grimmond S.M."/>
            <person name="Teasdale R.D."/>
            <person name="Liu E.T."/>
            <person name="Brusic V."/>
            <person name="Quackenbush J."/>
            <person name="Wahlestedt C."/>
            <person name="Mattick J.S."/>
            <person name="Hume D.A."/>
            <person name="Kai C."/>
            <person name="Sasaki D."/>
            <person name="Tomaru Y."/>
            <person name="Fukuda S."/>
            <person name="Kanamori-Katayama M."/>
            <person name="Suzuki M."/>
            <person name="Aoki J."/>
            <person name="Arakawa T."/>
            <person name="Iida J."/>
            <person name="Imamura K."/>
            <person name="Itoh M."/>
            <person name="Kato T."/>
            <person name="Kawaji H."/>
            <person name="Kawagashira N."/>
            <person name="Kawashima T."/>
            <person name="Kojima M."/>
            <person name="Kondo S."/>
            <person name="Konno H."/>
            <person name="Nakano K."/>
            <person name="Ninomiya N."/>
            <person name="Nishio T."/>
            <person name="Okada M."/>
            <person name="Plessy C."/>
            <person name="Shibata K."/>
            <person name="Shiraki T."/>
            <person name="Suzuki S."/>
            <person name="Tagami M."/>
            <person name="Waki K."/>
            <person name="Watahiki A."/>
            <person name="Okamura-Oho Y."/>
            <person name="Suzuki H."/>
            <person name="Kawai J."/>
            <person name="Hayashizaki Y."/>
        </authorList>
    </citation>
    <scope>NUCLEOTIDE SEQUENCE [LARGE SCALE MRNA]</scope>
    <source>
        <strain>C57BL/6J</strain>
        <tissue>Head</tissue>
    </source>
</reference>
<reference key="4">
    <citation type="journal article" date="1998" name="J. Cell Biol.">
        <title>Molecular organization of sarcoglycan complex in mouse myotubes in culture.</title>
        <authorList>
            <person name="Chan Y.-M."/>
            <person name="Boennemann C.G."/>
            <person name="Lidov H.G.W."/>
            <person name="Kunkel L.M."/>
        </authorList>
    </citation>
    <scope>SUBCELLULAR LOCATION</scope>
    <scope>SUBUNIT</scope>
    <scope>DISULFIDE BONDS</scope>
</reference>
<reference key="5">
    <citation type="journal article" date="2004" name="Genome Res.">
        <title>The status, quality, and expansion of the NIH full-length cDNA project: the Mammalian Gene Collection (MGC).</title>
        <authorList>
            <consortium name="The MGC Project Team"/>
        </authorList>
    </citation>
    <scope>NUCLEOTIDE SEQUENCE [LARGE SCALE MRNA]</scope>
    <source>
        <tissue>Testis</tissue>
    </source>
</reference>
<reference key="6">
    <citation type="journal article" date="2010" name="Cell">
        <title>A tissue-specific atlas of mouse protein phosphorylation and expression.</title>
        <authorList>
            <person name="Huttlin E.L."/>
            <person name="Jedrychowski M.P."/>
            <person name="Elias J.E."/>
            <person name="Goswami T."/>
            <person name="Rad R."/>
            <person name="Beausoleil S.A."/>
            <person name="Villen J."/>
            <person name="Haas W."/>
            <person name="Sowa M.E."/>
            <person name="Gygi S.P."/>
        </authorList>
    </citation>
    <scope>IDENTIFICATION BY MASS SPECTROMETRY [LARGE SCALE ANALYSIS]</scope>
    <source>
        <tissue>Heart</tissue>
    </source>
</reference>
<proteinExistence type="evidence at protein level"/>
<accession>P82349</accession>
<accession>Q3TEU9</accession>
<evidence type="ECO:0000255" key="1"/>
<evidence type="ECO:0000256" key="2">
    <source>
        <dbReference type="SAM" id="MobiDB-lite"/>
    </source>
</evidence>
<evidence type="ECO:0000269" key="3">
    <source>
    </source>
</evidence>
<evidence type="ECO:0000305" key="4"/>
<name>SGCB_MOUSE</name>
<keyword id="KW-0002">3D-structure</keyword>
<keyword id="KW-1003">Cell membrane</keyword>
<keyword id="KW-0963">Cytoplasm</keyword>
<keyword id="KW-0206">Cytoskeleton</keyword>
<keyword id="KW-1015">Disulfide bond</keyword>
<keyword id="KW-0325">Glycoprotein</keyword>
<keyword id="KW-0472">Membrane</keyword>
<keyword id="KW-1185">Reference proteome</keyword>
<keyword id="KW-0735">Signal-anchor</keyword>
<keyword id="KW-0812">Transmembrane</keyword>
<keyword id="KW-1133">Transmembrane helix</keyword>